<proteinExistence type="inferred from homology"/>
<evidence type="ECO:0000255" key="1">
    <source>
        <dbReference type="HAMAP-Rule" id="MF_01365"/>
    </source>
</evidence>
<evidence type="ECO:0000305" key="2"/>
<dbReference type="EMBL" id="CP000479">
    <property type="protein sequence ID" value="ABK65087.1"/>
    <property type="molecule type" value="Genomic_DNA"/>
</dbReference>
<dbReference type="RefSeq" id="WP_003873497.1">
    <property type="nucleotide sequence ID" value="NC_008595.1"/>
</dbReference>
<dbReference type="SMR" id="A0QKZ7"/>
<dbReference type="GeneID" id="75271964"/>
<dbReference type="KEGG" id="mav:MAV_4450"/>
<dbReference type="HOGENOM" id="CLU_065464_1_2_11"/>
<dbReference type="Proteomes" id="UP000001574">
    <property type="component" value="Chromosome"/>
</dbReference>
<dbReference type="GO" id="GO:0022625">
    <property type="term" value="C:cytosolic large ribosomal subunit"/>
    <property type="evidence" value="ECO:0007669"/>
    <property type="project" value="TreeGrafter"/>
</dbReference>
<dbReference type="GO" id="GO:0019843">
    <property type="term" value="F:rRNA binding"/>
    <property type="evidence" value="ECO:0007669"/>
    <property type="project" value="UniProtKB-UniRule"/>
</dbReference>
<dbReference type="GO" id="GO:0003735">
    <property type="term" value="F:structural constituent of ribosome"/>
    <property type="evidence" value="ECO:0007669"/>
    <property type="project" value="InterPro"/>
</dbReference>
<dbReference type="GO" id="GO:0002181">
    <property type="term" value="P:cytoplasmic translation"/>
    <property type="evidence" value="ECO:0007669"/>
    <property type="project" value="TreeGrafter"/>
</dbReference>
<dbReference type="FunFam" id="3.90.930.12:FF:000001">
    <property type="entry name" value="50S ribosomal protein L6"/>
    <property type="match status" value="1"/>
</dbReference>
<dbReference type="FunFam" id="3.90.930.12:FF:000002">
    <property type="entry name" value="50S ribosomal protein L6"/>
    <property type="match status" value="1"/>
</dbReference>
<dbReference type="Gene3D" id="3.90.930.12">
    <property type="entry name" value="Ribosomal protein L6, alpha-beta domain"/>
    <property type="match status" value="2"/>
</dbReference>
<dbReference type="HAMAP" id="MF_01365_B">
    <property type="entry name" value="Ribosomal_uL6_B"/>
    <property type="match status" value="1"/>
</dbReference>
<dbReference type="InterPro" id="IPR000702">
    <property type="entry name" value="Ribosomal_uL6-like"/>
</dbReference>
<dbReference type="InterPro" id="IPR036789">
    <property type="entry name" value="Ribosomal_uL6-like_a/b-dom_sf"/>
</dbReference>
<dbReference type="InterPro" id="IPR020040">
    <property type="entry name" value="Ribosomal_uL6_a/b-dom"/>
</dbReference>
<dbReference type="InterPro" id="IPR019906">
    <property type="entry name" value="Ribosomal_uL6_bac-type"/>
</dbReference>
<dbReference type="InterPro" id="IPR002358">
    <property type="entry name" value="Ribosomal_uL6_CS"/>
</dbReference>
<dbReference type="NCBIfam" id="TIGR03654">
    <property type="entry name" value="L6_bact"/>
    <property type="match status" value="1"/>
</dbReference>
<dbReference type="PANTHER" id="PTHR11655">
    <property type="entry name" value="60S/50S RIBOSOMAL PROTEIN L6/L9"/>
    <property type="match status" value="1"/>
</dbReference>
<dbReference type="PANTHER" id="PTHR11655:SF14">
    <property type="entry name" value="LARGE RIBOSOMAL SUBUNIT PROTEIN UL6M"/>
    <property type="match status" value="1"/>
</dbReference>
<dbReference type="Pfam" id="PF00347">
    <property type="entry name" value="Ribosomal_L6"/>
    <property type="match status" value="2"/>
</dbReference>
<dbReference type="PIRSF" id="PIRSF002162">
    <property type="entry name" value="Ribosomal_L6"/>
    <property type="match status" value="1"/>
</dbReference>
<dbReference type="PRINTS" id="PR00059">
    <property type="entry name" value="RIBOSOMALL6"/>
</dbReference>
<dbReference type="SUPFAM" id="SSF56053">
    <property type="entry name" value="Ribosomal protein L6"/>
    <property type="match status" value="2"/>
</dbReference>
<dbReference type="PROSITE" id="PS00525">
    <property type="entry name" value="RIBOSOMAL_L6_1"/>
    <property type="match status" value="1"/>
</dbReference>
<protein>
    <recommendedName>
        <fullName evidence="1">Large ribosomal subunit protein uL6</fullName>
    </recommendedName>
    <alternativeName>
        <fullName evidence="2">50S ribosomal protein L6</fullName>
    </alternativeName>
</protein>
<comment type="function">
    <text evidence="1">This protein binds to the 23S rRNA, and is important in its secondary structure. It is located near the subunit interface in the base of the L7/L12 stalk, and near the tRNA binding site of the peptidyltransferase center.</text>
</comment>
<comment type="subunit">
    <text evidence="1">Part of the 50S ribosomal subunit.</text>
</comment>
<comment type="similarity">
    <text evidence="1">Belongs to the universal ribosomal protein uL6 family.</text>
</comment>
<keyword id="KW-0687">Ribonucleoprotein</keyword>
<keyword id="KW-0689">Ribosomal protein</keyword>
<keyword id="KW-0694">RNA-binding</keyword>
<keyword id="KW-0699">rRNA-binding</keyword>
<sequence length="179" mass="19454">MSRIGKQPVPVPAGVDVTIDGQKVSVKGPKGTLDLTVAEPITVSRNDDGAIVVTRPNDERRNRSLHGLSRTLVSNLVTGVTQGYTTKMEIFGVGYRVQLKGSNLEFALGYSHPVVIEAPEGITFAVQSPTKFSISGIDKQKVGQISANIRRLRRPDPYKGKGVRYEGEQIRRKVGKTGK</sequence>
<accession>A0QKZ7</accession>
<organism>
    <name type="scientific">Mycobacterium avium (strain 104)</name>
    <dbReference type="NCBI Taxonomy" id="243243"/>
    <lineage>
        <taxon>Bacteria</taxon>
        <taxon>Bacillati</taxon>
        <taxon>Actinomycetota</taxon>
        <taxon>Actinomycetes</taxon>
        <taxon>Mycobacteriales</taxon>
        <taxon>Mycobacteriaceae</taxon>
        <taxon>Mycobacterium</taxon>
        <taxon>Mycobacterium avium complex (MAC)</taxon>
    </lineage>
</organism>
<name>RL6_MYCA1</name>
<gene>
    <name evidence="1" type="primary">rplF</name>
    <name type="ordered locus">MAV_4450</name>
</gene>
<reference key="1">
    <citation type="submission" date="2006-10" db="EMBL/GenBank/DDBJ databases">
        <authorList>
            <person name="Fleischmann R.D."/>
            <person name="Dodson R.J."/>
            <person name="Haft D.H."/>
            <person name="Merkel J.S."/>
            <person name="Nelson W.C."/>
            <person name="Fraser C.M."/>
        </authorList>
    </citation>
    <scope>NUCLEOTIDE SEQUENCE [LARGE SCALE GENOMIC DNA]</scope>
    <source>
        <strain>104</strain>
    </source>
</reference>
<feature type="chain" id="PRO_1000055263" description="Large ribosomal subunit protein uL6">
    <location>
        <begin position="1"/>
        <end position="179"/>
    </location>
</feature>